<proteinExistence type="evidence at protein level"/>
<comment type="subunit">
    <text evidence="5">Interacts with MPC.</text>
</comment>
<comment type="subcellular location">
    <subcellularLocation>
        <location evidence="7">Nucleus</location>
    </subcellularLocation>
</comment>
<comment type="alternative products">
    <event type="alternative splicing"/>
    <isoform>
        <id>Q9C8M0-1</id>
        <name>1</name>
        <sequence type="displayed"/>
    </isoform>
    <isoform>
        <id>Q9C8M0-2</id>
        <name>2</name>
        <sequence type="described" ref="VSP_054321"/>
    </isoform>
</comment>
<comment type="tissue specificity">
    <text evidence="4">Expressed in cauline leaves, stems, rosette leaves, immature siliques and primary inflorescences but at a low level.</text>
</comment>
<comment type="domain">
    <text>Contains a PAM2-like motif, which seems to be involved in the binding to the PABC/CTC domain of PAB proteins.</text>
</comment>
<feature type="chain" id="PRO_0000428898" description="Polyadenylate-binding protein-interacting protein 8">
    <location>
        <begin position="1"/>
        <end position="314"/>
    </location>
</feature>
<feature type="domain" description="RRM 1" evidence="2">
    <location>
        <begin position="128"/>
        <end position="203"/>
    </location>
</feature>
<feature type="domain" description="RRM 2" evidence="2">
    <location>
        <begin position="225"/>
        <end position="301"/>
    </location>
</feature>
<feature type="region of interest" description="Disordered" evidence="3">
    <location>
        <begin position="1"/>
        <end position="47"/>
    </location>
</feature>
<feature type="short sequence motif" description="PAM2-like">
    <location>
        <begin position="59"/>
        <end position="69"/>
    </location>
</feature>
<feature type="short sequence motif" description="Bipartite nuclear localization signal" evidence="1">
    <location>
        <begin position="99"/>
        <end position="112"/>
    </location>
</feature>
<feature type="compositionally biased region" description="Basic and acidic residues" evidence="3">
    <location>
        <begin position="23"/>
        <end position="47"/>
    </location>
</feature>
<feature type="splice variant" id="VSP_054321" description="In isoform 2." evidence="6">
    <location>
        <begin position="95"/>
        <end position="100"/>
    </location>
</feature>
<accession>Q9C8M0</accession>
<accession>F4HRL0</accession>
<accession>Q67ZZ8</accession>
<organism>
    <name type="scientific">Arabidopsis thaliana</name>
    <name type="common">Mouse-ear cress</name>
    <dbReference type="NCBI Taxonomy" id="3702"/>
    <lineage>
        <taxon>Eukaryota</taxon>
        <taxon>Viridiplantae</taxon>
        <taxon>Streptophyta</taxon>
        <taxon>Embryophyta</taxon>
        <taxon>Tracheophyta</taxon>
        <taxon>Spermatophyta</taxon>
        <taxon>Magnoliopsida</taxon>
        <taxon>eudicotyledons</taxon>
        <taxon>Gunneridae</taxon>
        <taxon>Pentapetalae</taxon>
        <taxon>rosids</taxon>
        <taxon>malvids</taxon>
        <taxon>Brassicales</taxon>
        <taxon>Brassicaceae</taxon>
        <taxon>Camelineae</taxon>
        <taxon>Arabidopsis</taxon>
    </lineage>
</organism>
<keyword id="KW-0025">Alternative splicing</keyword>
<keyword id="KW-0539">Nucleus</keyword>
<keyword id="KW-1185">Reference proteome</keyword>
<keyword id="KW-0677">Repeat</keyword>
<keyword id="KW-0694">RNA-binding</keyword>
<protein>
    <recommendedName>
        <fullName>Polyadenylate-binding protein-interacting protein 8</fullName>
        <shortName>PABP-interacting protein 8</shortName>
        <shortName>Poly(A)-binding protein-interacting protein 8</shortName>
    </recommendedName>
    <alternativeName>
        <fullName>PAM2-containing protein CID8</fullName>
    </alternativeName>
    <alternativeName>
        <fullName>Protein CTC-INTERACTING DOMAIN 8</fullName>
    </alternativeName>
</protein>
<reference key="1">
    <citation type="journal article" date="2000" name="Nature">
        <title>Sequence and analysis of chromosome 1 of the plant Arabidopsis thaliana.</title>
        <authorList>
            <person name="Theologis A."/>
            <person name="Ecker J.R."/>
            <person name="Palm C.J."/>
            <person name="Federspiel N.A."/>
            <person name="Kaul S."/>
            <person name="White O."/>
            <person name="Alonso J."/>
            <person name="Altafi H."/>
            <person name="Araujo R."/>
            <person name="Bowman C.L."/>
            <person name="Brooks S.Y."/>
            <person name="Buehler E."/>
            <person name="Chan A."/>
            <person name="Chao Q."/>
            <person name="Chen H."/>
            <person name="Cheuk R.F."/>
            <person name="Chin C.W."/>
            <person name="Chung M.K."/>
            <person name="Conn L."/>
            <person name="Conway A.B."/>
            <person name="Conway A.R."/>
            <person name="Creasy T.H."/>
            <person name="Dewar K."/>
            <person name="Dunn P."/>
            <person name="Etgu P."/>
            <person name="Feldblyum T.V."/>
            <person name="Feng J.-D."/>
            <person name="Fong B."/>
            <person name="Fujii C.Y."/>
            <person name="Gill J.E."/>
            <person name="Goldsmith A.D."/>
            <person name="Haas B."/>
            <person name="Hansen N.F."/>
            <person name="Hughes B."/>
            <person name="Huizar L."/>
            <person name="Hunter J.L."/>
            <person name="Jenkins J."/>
            <person name="Johnson-Hopson C."/>
            <person name="Khan S."/>
            <person name="Khaykin E."/>
            <person name="Kim C.J."/>
            <person name="Koo H.L."/>
            <person name="Kremenetskaia I."/>
            <person name="Kurtz D.B."/>
            <person name="Kwan A."/>
            <person name="Lam B."/>
            <person name="Langin-Hooper S."/>
            <person name="Lee A."/>
            <person name="Lee J.M."/>
            <person name="Lenz C.A."/>
            <person name="Li J.H."/>
            <person name="Li Y.-P."/>
            <person name="Lin X."/>
            <person name="Liu S.X."/>
            <person name="Liu Z.A."/>
            <person name="Luros J.S."/>
            <person name="Maiti R."/>
            <person name="Marziali A."/>
            <person name="Militscher J."/>
            <person name="Miranda M."/>
            <person name="Nguyen M."/>
            <person name="Nierman W.C."/>
            <person name="Osborne B.I."/>
            <person name="Pai G."/>
            <person name="Peterson J."/>
            <person name="Pham P.K."/>
            <person name="Rizzo M."/>
            <person name="Rooney T."/>
            <person name="Rowley D."/>
            <person name="Sakano H."/>
            <person name="Salzberg S.L."/>
            <person name="Schwartz J.R."/>
            <person name="Shinn P."/>
            <person name="Southwick A.M."/>
            <person name="Sun H."/>
            <person name="Tallon L.J."/>
            <person name="Tambunga G."/>
            <person name="Toriumi M.J."/>
            <person name="Town C.D."/>
            <person name="Utterback T."/>
            <person name="Van Aken S."/>
            <person name="Vaysberg M."/>
            <person name="Vysotskaia V.S."/>
            <person name="Walker M."/>
            <person name="Wu D."/>
            <person name="Yu G."/>
            <person name="Fraser C.M."/>
            <person name="Venter J.C."/>
            <person name="Davis R.W."/>
        </authorList>
    </citation>
    <scope>NUCLEOTIDE SEQUENCE [LARGE SCALE GENOMIC DNA]</scope>
    <source>
        <strain>cv. Columbia</strain>
    </source>
</reference>
<reference key="2">
    <citation type="journal article" date="2017" name="Plant J.">
        <title>Araport11: a complete reannotation of the Arabidopsis thaliana reference genome.</title>
        <authorList>
            <person name="Cheng C.Y."/>
            <person name="Krishnakumar V."/>
            <person name="Chan A.P."/>
            <person name="Thibaud-Nissen F."/>
            <person name="Schobel S."/>
            <person name="Town C.D."/>
        </authorList>
    </citation>
    <scope>GENOME REANNOTATION</scope>
    <source>
        <strain>cv. Columbia</strain>
    </source>
</reference>
<reference key="3">
    <citation type="submission" date="2004-06" db="EMBL/GenBank/DDBJ databases">
        <title>Arabidosis ORF clones.</title>
        <authorList>
            <person name="Cheuk R."/>
            <person name="Chen H."/>
            <person name="Kim C.J."/>
            <person name="Shinn P."/>
            <person name="Ecker J.R."/>
        </authorList>
    </citation>
    <scope>NUCLEOTIDE SEQUENCE [LARGE SCALE MRNA] (ISOFORM 1)</scope>
    <source>
        <strain>cv. Columbia</strain>
    </source>
</reference>
<reference key="4">
    <citation type="submission" date="2004-09" db="EMBL/GenBank/DDBJ databases">
        <title>Large-scale analysis of RIKEN Arabidopsis full-length (RAFL) cDNAs.</title>
        <authorList>
            <person name="Totoki Y."/>
            <person name="Seki M."/>
            <person name="Ishida J."/>
            <person name="Nakajima M."/>
            <person name="Enju A."/>
            <person name="Kamiya A."/>
            <person name="Narusaka M."/>
            <person name="Shin-i T."/>
            <person name="Nakagawa M."/>
            <person name="Sakamoto N."/>
            <person name="Oishi K."/>
            <person name="Kohara Y."/>
            <person name="Kobayashi M."/>
            <person name="Toyoda A."/>
            <person name="Sakaki Y."/>
            <person name="Sakurai T."/>
            <person name="Iida K."/>
            <person name="Akiyama K."/>
            <person name="Satou M."/>
            <person name="Toyoda T."/>
            <person name="Konagaya A."/>
            <person name="Carninci P."/>
            <person name="Kawai J."/>
            <person name="Hayashizaki Y."/>
            <person name="Shinozaki K."/>
        </authorList>
    </citation>
    <scope>NUCLEOTIDE SEQUENCE [LARGE SCALE MRNA] OF 14-314 (ISOFORM 2)</scope>
    <source>
        <strain>cv. Columbia</strain>
    </source>
</reference>
<reference key="5">
    <citation type="journal article" date="2005" name="Mol. Genet. Genomics">
        <title>Four distinct classes of proteins as interaction partners of the PABC domain of Arabidopsis thaliana Poly(A)-binding proteins.</title>
        <authorList>
            <person name="Bravo J."/>
            <person name="Aguilar-Henonin L."/>
            <person name="Olmedo G."/>
            <person name="Guzman P."/>
        </authorList>
    </citation>
    <scope>GENE FAMILY</scope>
    <scope>PAM2 MOTIF</scope>
    <scope>TISSUE SPECIFICITY</scope>
</reference>
<reference key="6">
    <citation type="journal article" date="2008" name="Plant Cell">
        <title>MATERNALLY EXPRESSED PAB C-TERMINAL, a novel imprinted gene in Arabidopsis, encodes the conserved C-terminal domain of polyadenylate binding proteins.</title>
        <authorList>
            <person name="Tiwari S."/>
            <person name="Schulz R."/>
            <person name="Ikeda Y."/>
            <person name="Dytham L."/>
            <person name="Bravo J."/>
            <person name="Mathers L."/>
            <person name="Spielman M."/>
            <person name="Guzman P."/>
            <person name="Oakey R.J."/>
            <person name="Kinoshita T."/>
            <person name="Scott R.J."/>
        </authorList>
    </citation>
    <scope>INTERACTION WITH MPC</scope>
</reference>
<name>CID8_ARATH</name>
<dbReference type="EMBL" id="AC024260">
    <property type="protein sequence ID" value="AAG51971.1"/>
    <property type="molecule type" value="Genomic_DNA"/>
</dbReference>
<dbReference type="EMBL" id="CP002684">
    <property type="protein sequence ID" value="AEE32976.1"/>
    <property type="molecule type" value="Genomic_DNA"/>
</dbReference>
<dbReference type="EMBL" id="CP002684">
    <property type="protein sequence ID" value="AEE32977.1"/>
    <property type="molecule type" value="Genomic_DNA"/>
</dbReference>
<dbReference type="EMBL" id="BT014885">
    <property type="protein sequence ID" value="AAT42377.1"/>
    <property type="molecule type" value="mRNA"/>
</dbReference>
<dbReference type="EMBL" id="AK175783">
    <property type="protein sequence ID" value="BAD43546.1"/>
    <property type="molecule type" value="mRNA"/>
</dbReference>
<dbReference type="EMBL" id="AK175969">
    <property type="protein sequence ID" value="BAD43732.1"/>
    <property type="molecule type" value="mRNA"/>
</dbReference>
<dbReference type="PIR" id="F96576">
    <property type="entry name" value="F96576"/>
</dbReference>
<dbReference type="RefSeq" id="NP_001031182.1">
    <molecule id="Q9C8M0-2"/>
    <property type="nucleotide sequence ID" value="NM_001036105.1"/>
</dbReference>
<dbReference type="RefSeq" id="NP_175769.1">
    <molecule id="Q9C8M0-1"/>
    <property type="nucleotide sequence ID" value="NM_104243.4"/>
</dbReference>
<dbReference type="SMR" id="Q9C8M0"/>
<dbReference type="BioGRID" id="27027">
    <property type="interactions" value="3"/>
</dbReference>
<dbReference type="FunCoup" id="Q9C8M0">
    <property type="interactions" value="502"/>
</dbReference>
<dbReference type="IntAct" id="Q9C8M0">
    <property type="interactions" value="2"/>
</dbReference>
<dbReference type="STRING" id="3702.Q9C8M0"/>
<dbReference type="iPTMnet" id="Q9C8M0"/>
<dbReference type="PaxDb" id="3702-AT1G53650.1"/>
<dbReference type="ProteomicsDB" id="246942">
    <molecule id="Q9C8M0-1"/>
</dbReference>
<dbReference type="EnsemblPlants" id="AT1G53650.1">
    <molecule id="Q9C8M0-1"/>
    <property type="protein sequence ID" value="AT1G53650.1"/>
    <property type="gene ID" value="AT1G53650"/>
</dbReference>
<dbReference type="EnsemblPlants" id="AT1G53650.2">
    <molecule id="Q9C8M0-2"/>
    <property type="protein sequence ID" value="AT1G53650.2"/>
    <property type="gene ID" value="AT1G53650"/>
</dbReference>
<dbReference type="GeneID" id="841802"/>
<dbReference type="Gramene" id="AT1G53650.1">
    <molecule id="Q9C8M0-1"/>
    <property type="protein sequence ID" value="AT1G53650.1"/>
    <property type="gene ID" value="AT1G53650"/>
</dbReference>
<dbReference type="Gramene" id="AT1G53650.2">
    <molecule id="Q9C8M0-2"/>
    <property type="protein sequence ID" value="AT1G53650.2"/>
    <property type="gene ID" value="AT1G53650"/>
</dbReference>
<dbReference type="KEGG" id="ath:AT1G53650"/>
<dbReference type="Araport" id="AT1G53650"/>
<dbReference type="TAIR" id="AT1G53650">
    <property type="gene designation" value="CID8"/>
</dbReference>
<dbReference type="eggNOG" id="KOG0118">
    <property type="taxonomic scope" value="Eukaryota"/>
</dbReference>
<dbReference type="InParanoid" id="Q9C8M0"/>
<dbReference type="OMA" id="VEFTNEH"/>
<dbReference type="PhylomeDB" id="Q9C8M0"/>
<dbReference type="PRO" id="PR:Q9C8M0"/>
<dbReference type="Proteomes" id="UP000006548">
    <property type="component" value="Chromosome 1"/>
</dbReference>
<dbReference type="ExpressionAtlas" id="Q9C8M0">
    <property type="expression patterns" value="baseline and differential"/>
</dbReference>
<dbReference type="GO" id="GO:0005634">
    <property type="term" value="C:nucleus"/>
    <property type="evidence" value="ECO:0007669"/>
    <property type="project" value="UniProtKB-SubCell"/>
</dbReference>
<dbReference type="GO" id="GO:0003723">
    <property type="term" value="F:RNA binding"/>
    <property type="evidence" value="ECO:0007669"/>
    <property type="project" value="UniProtKB-KW"/>
</dbReference>
<dbReference type="CDD" id="cd12459">
    <property type="entry name" value="RRM1_CID8_like"/>
    <property type="match status" value="1"/>
</dbReference>
<dbReference type="CDD" id="cd12460">
    <property type="entry name" value="RRM2_CID8_like"/>
    <property type="match status" value="1"/>
</dbReference>
<dbReference type="FunFam" id="3.30.70.330:FF:000665">
    <property type="entry name" value="Polyadenylate-binding protein-interacting protein 10"/>
    <property type="match status" value="1"/>
</dbReference>
<dbReference type="FunFam" id="3.30.70.330:FF:000530">
    <property type="entry name" value="Polyadenylate-binding protein-interacting protein 11"/>
    <property type="match status" value="1"/>
</dbReference>
<dbReference type="Gene3D" id="3.30.70.330">
    <property type="match status" value="2"/>
</dbReference>
<dbReference type="InterPro" id="IPR034823">
    <property type="entry name" value="CID8-like_RRM1"/>
</dbReference>
<dbReference type="InterPro" id="IPR034825">
    <property type="entry name" value="CID8-like_RRM2"/>
</dbReference>
<dbReference type="InterPro" id="IPR012677">
    <property type="entry name" value="Nucleotide-bd_a/b_plait_sf"/>
</dbReference>
<dbReference type="InterPro" id="IPR009818">
    <property type="entry name" value="PAM2_motif"/>
</dbReference>
<dbReference type="InterPro" id="IPR035979">
    <property type="entry name" value="RBD_domain_sf"/>
</dbReference>
<dbReference type="InterPro" id="IPR000504">
    <property type="entry name" value="RRM_dom"/>
</dbReference>
<dbReference type="PANTHER" id="PTHR32343:SF34">
    <property type="entry name" value="POLYADENYLATE-BINDING PROTEIN-INTERACTING PROTEIN 8"/>
    <property type="match status" value="1"/>
</dbReference>
<dbReference type="PANTHER" id="PTHR32343">
    <property type="entry name" value="SERINE/ARGININE-RICH SPLICING FACTOR"/>
    <property type="match status" value="1"/>
</dbReference>
<dbReference type="Pfam" id="PF07145">
    <property type="entry name" value="PAM2"/>
    <property type="match status" value="1"/>
</dbReference>
<dbReference type="Pfam" id="PF00076">
    <property type="entry name" value="RRM_1"/>
    <property type="match status" value="2"/>
</dbReference>
<dbReference type="SMART" id="SM00360">
    <property type="entry name" value="RRM"/>
    <property type="match status" value="2"/>
</dbReference>
<dbReference type="SUPFAM" id="SSF54928">
    <property type="entry name" value="RNA-binding domain, RBD"/>
    <property type="match status" value="2"/>
</dbReference>
<dbReference type="PROSITE" id="PS50102">
    <property type="entry name" value="RRM"/>
    <property type="match status" value="2"/>
</dbReference>
<sequence>MAAITEMATDSNDVINDGGTGDGIEKSTDSKPEIESDDLKPKSKPEYDQMKKLVAMFKKLNPEAKEFFPSYKRNTNQSDDFVIAIKPSGEDNKKVAINRRRRNNYNQGRRVRLPGRASKAQREDSIRRTVYVSDIDQSVTEEGLAGLFSSCGQVVDCRICGDPNSVLRFAFVEFSDDQGARSALSLGGTMIGYYPVRVLPSKTAILPVNPTFLPRSEDEREMCSRTIYCTNVDKNATEDDVNTFFQSACGEVTRLRLLGDQVHSTRIAFVEFAMAESAVAALNCSGIVLGSQPIRVSPSKTPVRSRITRSPSPN</sequence>
<gene>
    <name type="primary">CID8</name>
    <name type="ordered locus">At1g53650</name>
    <name type="ORF">F22G10.7</name>
</gene>
<evidence type="ECO:0000255" key="1"/>
<evidence type="ECO:0000255" key="2">
    <source>
        <dbReference type="PROSITE-ProRule" id="PRU00176"/>
    </source>
</evidence>
<evidence type="ECO:0000256" key="3">
    <source>
        <dbReference type="SAM" id="MobiDB-lite"/>
    </source>
</evidence>
<evidence type="ECO:0000269" key="4">
    <source>
    </source>
</evidence>
<evidence type="ECO:0000269" key="5">
    <source>
    </source>
</evidence>
<evidence type="ECO:0000303" key="6">
    <source ref="4"/>
</evidence>
<evidence type="ECO:0000305" key="7"/>